<reference key="1">
    <citation type="journal article" date="2002" name="J. Bacteriol.">
        <title>Whole-genome comparison of Mycobacterium tuberculosis clinical and laboratory strains.</title>
        <authorList>
            <person name="Fleischmann R.D."/>
            <person name="Alland D."/>
            <person name="Eisen J.A."/>
            <person name="Carpenter L."/>
            <person name="White O."/>
            <person name="Peterson J.D."/>
            <person name="DeBoy R.T."/>
            <person name="Dodson R.J."/>
            <person name="Gwinn M.L."/>
            <person name="Haft D.H."/>
            <person name="Hickey E.K."/>
            <person name="Kolonay J.F."/>
            <person name="Nelson W.C."/>
            <person name="Umayam L.A."/>
            <person name="Ermolaeva M.D."/>
            <person name="Salzberg S.L."/>
            <person name="Delcher A."/>
            <person name="Utterback T.R."/>
            <person name="Weidman J.F."/>
            <person name="Khouri H.M."/>
            <person name="Gill J."/>
            <person name="Mikula A."/>
            <person name="Bishai W."/>
            <person name="Jacobs W.R. Jr."/>
            <person name="Venter J.C."/>
            <person name="Fraser C.M."/>
        </authorList>
    </citation>
    <scope>NUCLEOTIDE SEQUENCE [LARGE SCALE GENOMIC DNA]</scope>
    <source>
        <strain>CDC 1551 / Oshkosh</strain>
    </source>
</reference>
<sequence>MTAPETPAAQHAEPAIAVERIRTALLGYRIMAWTTGLWLIALCYEIVVRYVVKVDNPPTWIGVVHGWVYFTYLLLTLNLAVKVRWPLGKTAGVLLAGTIPLLGIVVEHFQTKEIKARFGL</sequence>
<gene>
    <name type="ordered locus">MT1383</name>
</gene>
<feature type="chain" id="PRO_0000427381" description="Uncharacterized protein MT1383">
    <location>
        <begin position="1"/>
        <end position="120"/>
    </location>
</feature>
<feature type="transmembrane region" description="Helical" evidence="1">
    <location>
        <begin position="24"/>
        <end position="44"/>
    </location>
</feature>
<feature type="transmembrane region" description="Helical" evidence="1">
    <location>
        <begin position="61"/>
        <end position="81"/>
    </location>
</feature>
<feature type="transmembrane region" description="Helical" evidence="1">
    <location>
        <begin position="86"/>
        <end position="106"/>
    </location>
</feature>
<keyword id="KW-1003">Cell membrane</keyword>
<keyword id="KW-0472">Membrane</keyword>
<keyword id="KW-1185">Reference proteome</keyword>
<keyword id="KW-0812">Transmembrane</keyword>
<keyword id="KW-1133">Transmembrane helix</keyword>
<accession>P9WM18</accession>
<accession>L0T7Z9</accession>
<accession>P0A5E7</accession>
<accession>Q11012</accession>
<evidence type="ECO:0000255" key="1"/>
<evidence type="ECO:0000305" key="2"/>
<comment type="subcellular location">
    <subcellularLocation>
        <location evidence="2">Cell membrane</location>
        <topology evidence="2">Multi-pass membrane protein</topology>
    </subcellularLocation>
</comment>
<comment type="similarity">
    <text evidence="2">To M.leprae ML1176.</text>
</comment>
<dbReference type="EMBL" id="AE000516">
    <property type="protein sequence ID" value="AAK45648.1"/>
    <property type="molecule type" value="Genomic_DNA"/>
</dbReference>
<dbReference type="PIR" id="E70739">
    <property type="entry name" value="E70739"/>
</dbReference>
<dbReference type="RefSeq" id="WP_003406937.1">
    <property type="nucleotide sequence ID" value="NZ_KK341227.1"/>
</dbReference>
<dbReference type="SMR" id="P9WM18"/>
<dbReference type="KEGG" id="mtc:MT1383"/>
<dbReference type="PATRIC" id="fig|83331.31.peg.1491"/>
<dbReference type="HOGENOM" id="CLU_120964_1_2_11"/>
<dbReference type="Proteomes" id="UP000001020">
    <property type="component" value="Chromosome"/>
</dbReference>
<dbReference type="GO" id="GO:0005886">
    <property type="term" value="C:plasma membrane"/>
    <property type="evidence" value="ECO:0007669"/>
    <property type="project" value="UniProtKB-SubCell"/>
</dbReference>
<dbReference type="InterPro" id="IPR023845">
    <property type="entry name" value="DUF3817_TM"/>
</dbReference>
<dbReference type="NCBIfam" id="TIGR03954">
    <property type="entry name" value="integ_memb_HG"/>
    <property type="match status" value="1"/>
</dbReference>
<dbReference type="PANTHER" id="PTHR40077:SF2">
    <property type="entry name" value="MEMBRANE PROTEIN"/>
    <property type="match status" value="1"/>
</dbReference>
<dbReference type="PANTHER" id="PTHR40077">
    <property type="entry name" value="MEMBRANE PROTEIN-RELATED"/>
    <property type="match status" value="1"/>
</dbReference>
<dbReference type="Pfam" id="PF12823">
    <property type="entry name" value="DUF3817"/>
    <property type="match status" value="1"/>
</dbReference>
<organism>
    <name type="scientific">Mycobacterium tuberculosis (strain CDC 1551 / Oshkosh)</name>
    <dbReference type="NCBI Taxonomy" id="83331"/>
    <lineage>
        <taxon>Bacteria</taxon>
        <taxon>Bacillati</taxon>
        <taxon>Actinomycetota</taxon>
        <taxon>Actinomycetes</taxon>
        <taxon>Mycobacteriales</taxon>
        <taxon>Mycobacteriaceae</taxon>
        <taxon>Mycobacterium</taxon>
        <taxon>Mycobacterium tuberculosis complex</taxon>
    </lineage>
</organism>
<name>Y1342_MYCTO</name>
<proteinExistence type="predicted"/>
<protein>
    <recommendedName>
        <fullName>Uncharacterized protein MT1383</fullName>
    </recommendedName>
</protein>